<organism>
    <name type="scientific">Penicillium citrinum</name>
    <dbReference type="NCBI Taxonomy" id="5077"/>
    <lineage>
        <taxon>Eukaryota</taxon>
        <taxon>Fungi</taxon>
        <taxon>Dikarya</taxon>
        <taxon>Ascomycota</taxon>
        <taxon>Pezizomycotina</taxon>
        <taxon>Eurotiomycetes</taxon>
        <taxon>Eurotiomycetidae</taxon>
        <taxon>Eurotiales</taxon>
        <taxon>Aspergillaceae</taxon>
        <taxon>Penicillium</taxon>
    </lineage>
</organism>
<name>GKAC_PENCI</name>
<comment type="function">
    <text evidence="3 6">Trans-enoyl reductasee; part of the gene cluster that mediates the biosynthesis of GKK1032, fungal natural products containing a macrocyclic para-cyclophane connected to a decahydrofluorene ring system that show potent antitumor activities (PubMed:33834778). Within the pathway, the PKS-NRPS gkaA, with the help of the trans-enoyl reductase gkaC, synthesize the polyketide-tyrosyl acyl thioester product which can be reductively off-loaded by the terminal reductase (R) domain in gkaA (PubMed:33834778). The PKS module of gkaA acts in combination with the trans-acting enoyl reductase gkaC to produce a methylated polyketide attached to the ACP domain (PubMed:33834778). In parallel, the adenylation (A) domain of the NRPS module activated L-tyrosine, which is then transferred to the ACP domain. The condensation (C) domain subsequently links this group to the polyketide chain, forming an enzyme-bound amide (PubMed:33834778). The alpha/beta hydrolase gkaG is then required to catalyze the subsequent Knoevenagel condensation that affords the 3-pyrrolin-2-one ring, whereas the three proteins gkaB, gkadX and gkaZ then function synergistically to form the cyclophane (Probable).</text>
</comment>
<comment type="pathway">
    <text evidence="3">Mycotoxin biosynthesis.</text>
</comment>
<comment type="subunit">
    <text evidence="1">Monomer.</text>
</comment>
<comment type="similarity">
    <text evidence="5">Belongs to the zinc-containing alcohol dehydrogenase family.</text>
</comment>
<sequence>MDSLPTSQRAVVQSEDVGSFEISRGRPIPVPSSSQILIKVFAVALNHCDWKMPARVPCPGTVDGADYSGTIIALGDTAALTSGFKIGDRVAGAQMASQRRRPWVGAFTEYILEEADSAWLVPDSLSWEEAAAIGCAATSSVGMALWKSLNLPGTPQNPITEDGKYVLVYGGSSASGTFAIQLLRLSGYNVVTTCSPKNFGLVESYGAEKAFDYHSPTCGEDIRTYTGNTLEYALDIITEAKTIRHCYAAIGRGGGRYCGFELLPHDLIATMRRSVKAEWVNGLEMTGLEIDLPGGYYCKANPELHIWFADLIKQYSVLISQGKLRPHPIQINKGGLEKVIDGLGQMKRREISGKKMVYPLV</sequence>
<gene>
    <name evidence="4" type="primary">gkaC</name>
</gene>
<feature type="chain" id="PRO_0000458425" description="Trans-enoyl reductase gkaC">
    <location>
        <begin position="1"/>
        <end position="361"/>
    </location>
</feature>
<feature type="domain" description="Enoyl reductase (ER)" evidence="2">
    <location>
        <begin position="15"/>
        <end position="357"/>
    </location>
</feature>
<feature type="binding site" evidence="1">
    <location>
        <begin position="48"/>
        <end position="51"/>
    </location>
    <ligand>
        <name>NADP(+)</name>
        <dbReference type="ChEBI" id="CHEBI:58349"/>
    </ligand>
</feature>
<feature type="binding site" evidence="1">
    <location>
        <begin position="172"/>
        <end position="175"/>
    </location>
    <ligand>
        <name>NADP(+)</name>
        <dbReference type="ChEBI" id="CHEBI:58349"/>
    </ligand>
</feature>
<feature type="binding site" evidence="1">
    <location>
        <begin position="195"/>
        <end position="198"/>
    </location>
    <ligand>
        <name>NADP(+)</name>
        <dbReference type="ChEBI" id="CHEBI:58349"/>
    </ligand>
</feature>
<feature type="binding site" evidence="1">
    <location>
        <position position="213"/>
    </location>
    <ligand>
        <name>NADP(+)</name>
        <dbReference type="ChEBI" id="CHEBI:58349"/>
    </ligand>
</feature>
<feature type="binding site" evidence="1">
    <location>
        <begin position="260"/>
        <end position="261"/>
    </location>
    <ligand>
        <name>NADP(+)</name>
        <dbReference type="ChEBI" id="CHEBI:58349"/>
    </ligand>
</feature>
<feature type="binding site" evidence="1">
    <location>
        <begin position="351"/>
        <end position="352"/>
    </location>
    <ligand>
        <name>NADP(+)</name>
        <dbReference type="ChEBI" id="CHEBI:58349"/>
    </ligand>
</feature>
<accession>A0A8F4NUY3</accession>
<proteinExistence type="evidence at protein level"/>
<evidence type="ECO:0000250" key="1">
    <source>
        <dbReference type="UniProtKB" id="Q9Y7D0"/>
    </source>
</evidence>
<evidence type="ECO:0000255" key="2"/>
<evidence type="ECO:0000269" key="3">
    <source>
    </source>
</evidence>
<evidence type="ECO:0000303" key="4">
    <source>
    </source>
</evidence>
<evidence type="ECO:0000305" key="5"/>
<evidence type="ECO:0000305" key="6">
    <source>
    </source>
</evidence>
<protein>
    <recommendedName>
        <fullName evidence="4">Trans-enoyl reductase gkaC</fullName>
        <ecNumber evidence="3">1.-.-.-</ecNumber>
    </recommendedName>
    <alternativeName>
        <fullName evidence="4">GKK1032 biosynthesis cluster protein C</fullName>
    </alternativeName>
</protein>
<dbReference type="EC" id="1.-.-.-" evidence="3"/>
<dbReference type="EMBL" id="MW690135">
    <property type="protein sequence ID" value="QXF14612.1"/>
    <property type="molecule type" value="Genomic_DNA"/>
</dbReference>
<dbReference type="SMR" id="A0A8F4NUY3"/>
<dbReference type="OrthoDB" id="48317at2759"/>
<dbReference type="GO" id="GO:0000166">
    <property type="term" value="F:nucleotide binding"/>
    <property type="evidence" value="ECO:0007669"/>
    <property type="project" value="UniProtKB-KW"/>
</dbReference>
<dbReference type="GO" id="GO:0016651">
    <property type="term" value="F:oxidoreductase activity, acting on NAD(P)H"/>
    <property type="evidence" value="ECO:0007669"/>
    <property type="project" value="InterPro"/>
</dbReference>
<dbReference type="CDD" id="cd08249">
    <property type="entry name" value="enoyl_reductase_like"/>
    <property type="match status" value="1"/>
</dbReference>
<dbReference type="Gene3D" id="3.90.180.10">
    <property type="entry name" value="Medium-chain alcohol dehydrogenases, catalytic domain"/>
    <property type="match status" value="1"/>
</dbReference>
<dbReference type="Gene3D" id="3.40.50.720">
    <property type="entry name" value="NAD(P)-binding Rossmann-like Domain"/>
    <property type="match status" value="1"/>
</dbReference>
<dbReference type="InterPro" id="IPR013149">
    <property type="entry name" value="ADH-like_C"/>
</dbReference>
<dbReference type="InterPro" id="IPR013154">
    <property type="entry name" value="ADH-like_N"/>
</dbReference>
<dbReference type="InterPro" id="IPR011032">
    <property type="entry name" value="GroES-like_sf"/>
</dbReference>
<dbReference type="InterPro" id="IPR036291">
    <property type="entry name" value="NAD(P)-bd_dom_sf"/>
</dbReference>
<dbReference type="InterPro" id="IPR020843">
    <property type="entry name" value="PKS_ER"/>
</dbReference>
<dbReference type="InterPro" id="IPR047122">
    <property type="entry name" value="Trans-enoyl_RdTase-like"/>
</dbReference>
<dbReference type="PANTHER" id="PTHR45348">
    <property type="entry name" value="HYPOTHETICAL OXIDOREDUCTASE (EUROFUNG)"/>
    <property type="match status" value="1"/>
</dbReference>
<dbReference type="PANTHER" id="PTHR45348:SF1">
    <property type="entry name" value="TRANS-ENOYL REDUCTASE STHE"/>
    <property type="match status" value="1"/>
</dbReference>
<dbReference type="Pfam" id="PF08240">
    <property type="entry name" value="ADH_N"/>
    <property type="match status" value="1"/>
</dbReference>
<dbReference type="Pfam" id="PF00107">
    <property type="entry name" value="ADH_zinc_N"/>
    <property type="match status" value="1"/>
</dbReference>
<dbReference type="SMART" id="SM00829">
    <property type="entry name" value="PKS_ER"/>
    <property type="match status" value="1"/>
</dbReference>
<dbReference type="SUPFAM" id="SSF50129">
    <property type="entry name" value="GroES-like"/>
    <property type="match status" value="1"/>
</dbReference>
<dbReference type="SUPFAM" id="SSF51735">
    <property type="entry name" value="NAD(P)-binding Rossmann-fold domains"/>
    <property type="match status" value="1"/>
</dbReference>
<reference key="1">
    <citation type="journal article" date="2021" name="J. Am. Chem. Soc.">
        <title>Biosynthesis of para-cyclophane-containing hirsutellone family of fungal natural products.</title>
        <authorList>
            <person name="Ohashi M."/>
            <person name="Kakule T.B."/>
            <person name="Tang M.C."/>
            <person name="Jamieson C.S."/>
            <person name="Liu M."/>
            <person name="Zhao Y.L."/>
            <person name="Houk K.N."/>
            <person name="Tang Y."/>
        </authorList>
    </citation>
    <scope>NUCLEOTIDE SEQUENCE [GENOMIC DNA]</scope>
    <scope>FUNCTION</scope>
    <scope>CATALYTIC ACTIVITY</scope>
    <scope>PATHWAY</scope>
    <source>
        <strain>DSM 1997</strain>
    </source>
</reference>
<keyword id="KW-0521">NADP</keyword>
<keyword id="KW-0547">Nucleotide-binding</keyword>
<keyword id="KW-0560">Oxidoreductase</keyword>
<keyword id="KW-0843">Virulence</keyword>